<feature type="chain" id="PRO_1000116434" description="Cobyric acid synthase">
    <location>
        <begin position="1"/>
        <end position="495"/>
    </location>
</feature>
<feature type="domain" description="GATase cobBQ-type" evidence="1">
    <location>
        <begin position="250"/>
        <end position="444"/>
    </location>
</feature>
<feature type="active site" description="Nucleophile" evidence="1">
    <location>
        <position position="331"/>
    </location>
</feature>
<feature type="active site" evidence="1">
    <location>
        <position position="436"/>
    </location>
</feature>
<accession>B7JVZ0</accession>
<sequence>MKAIMVVGTTSHAGKSFITTAICRILARQGWHVTPFKGQNMALNAYVTPTGGEIGHAQAVQAWAAKITPSVDMNPILLKPQGNMTSQVIIHGQAVGTTSAQEYYEQYFDRGWKAITSSLDCLASEYDVVVCEGAGSPAEINLKHRDLTNMRVAHHLNAATILVVDIDRGGAFAHVVGTLQLLEPEEKALIKGIVINKFRGQRSLLDSGIEWLENYTSIPVLGVIPWREIMFPSEDSLGLLDRPSYRSTTSLKISILRLPHISNFTDFDPLDAETTVNLNYLDLRGTLGYPDAVIIPGSKTTIADLIALHTTGMAQQLQDYVSAGGVILGICGGFQMLGQTVFDPDQLEGGQKAYKGLNLLPLETIITSNKIVRQRQIMSNYPYSGLPVTGYEIHQGITQLIQSYETEQTILLDQLFDDISLGFVNESQTIWGCYLHGLFDNGAWRRSWLNYLRQRRGLPSLPTGIANYREQREANLDAIADLVEEFVNLKPVFPK</sequence>
<comment type="function">
    <text evidence="1">Catalyzes amidations at positions B, D, E, and G on adenosylcobyrinic A,C-diamide. NH(2) groups are provided by glutamine, and one molecule of ATP is hydrogenolyzed for each amidation.</text>
</comment>
<comment type="pathway">
    <text evidence="1">Cofactor biosynthesis; adenosylcobalamin biosynthesis.</text>
</comment>
<comment type="similarity">
    <text evidence="1">Belongs to the CobB/CobQ family. CobQ subfamily.</text>
</comment>
<name>COBQ_RIPO1</name>
<dbReference type="EMBL" id="CP001287">
    <property type="protein sequence ID" value="ACK65679.1"/>
    <property type="molecule type" value="Genomic_DNA"/>
</dbReference>
<dbReference type="RefSeq" id="WP_012594952.1">
    <property type="nucleotide sequence ID" value="NC_011726.1"/>
</dbReference>
<dbReference type="SMR" id="B7JVZ0"/>
<dbReference type="STRING" id="41431.PCC8801_1628"/>
<dbReference type="KEGG" id="cyp:PCC8801_1628"/>
<dbReference type="eggNOG" id="COG1492">
    <property type="taxonomic scope" value="Bacteria"/>
</dbReference>
<dbReference type="HOGENOM" id="CLU_019250_2_2_3"/>
<dbReference type="OrthoDB" id="9808302at2"/>
<dbReference type="UniPathway" id="UPA00148"/>
<dbReference type="Proteomes" id="UP000008204">
    <property type="component" value="Chromosome"/>
</dbReference>
<dbReference type="GO" id="GO:0015420">
    <property type="term" value="F:ABC-type vitamin B12 transporter activity"/>
    <property type="evidence" value="ECO:0007669"/>
    <property type="project" value="UniProtKB-UniRule"/>
</dbReference>
<dbReference type="GO" id="GO:0003824">
    <property type="term" value="F:catalytic activity"/>
    <property type="evidence" value="ECO:0007669"/>
    <property type="project" value="InterPro"/>
</dbReference>
<dbReference type="GO" id="GO:0009236">
    <property type="term" value="P:cobalamin biosynthetic process"/>
    <property type="evidence" value="ECO:0007669"/>
    <property type="project" value="UniProtKB-UniRule"/>
</dbReference>
<dbReference type="CDD" id="cd05389">
    <property type="entry name" value="CobQ_N"/>
    <property type="match status" value="1"/>
</dbReference>
<dbReference type="CDD" id="cd01750">
    <property type="entry name" value="GATase1_CobQ"/>
    <property type="match status" value="1"/>
</dbReference>
<dbReference type="Gene3D" id="3.40.50.880">
    <property type="match status" value="1"/>
</dbReference>
<dbReference type="Gene3D" id="3.40.50.300">
    <property type="entry name" value="P-loop containing nucleotide triphosphate hydrolases"/>
    <property type="match status" value="1"/>
</dbReference>
<dbReference type="HAMAP" id="MF_00028">
    <property type="entry name" value="CobQ"/>
    <property type="match status" value="1"/>
</dbReference>
<dbReference type="InterPro" id="IPR029062">
    <property type="entry name" value="Class_I_gatase-like"/>
</dbReference>
<dbReference type="InterPro" id="IPR002586">
    <property type="entry name" value="CobQ/CobB/MinD/ParA_Nub-bd_dom"/>
</dbReference>
<dbReference type="InterPro" id="IPR033949">
    <property type="entry name" value="CobQ_GATase1"/>
</dbReference>
<dbReference type="InterPro" id="IPR047045">
    <property type="entry name" value="CobQ_N"/>
</dbReference>
<dbReference type="InterPro" id="IPR004459">
    <property type="entry name" value="CobQ_synth"/>
</dbReference>
<dbReference type="InterPro" id="IPR011698">
    <property type="entry name" value="GATase_3"/>
</dbReference>
<dbReference type="InterPro" id="IPR027417">
    <property type="entry name" value="P-loop_NTPase"/>
</dbReference>
<dbReference type="NCBIfam" id="TIGR00313">
    <property type="entry name" value="cobQ"/>
    <property type="match status" value="1"/>
</dbReference>
<dbReference type="NCBIfam" id="NF001989">
    <property type="entry name" value="PRK00784.1"/>
    <property type="match status" value="1"/>
</dbReference>
<dbReference type="PANTHER" id="PTHR21343:SF1">
    <property type="entry name" value="COBYRIC ACID SYNTHASE"/>
    <property type="match status" value="1"/>
</dbReference>
<dbReference type="PANTHER" id="PTHR21343">
    <property type="entry name" value="DETHIOBIOTIN SYNTHETASE"/>
    <property type="match status" value="1"/>
</dbReference>
<dbReference type="Pfam" id="PF01656">
    <property type="entry name" value="CbiA"/>
    <property type="match status" value="1"/>
</dbReference>
<dbReference type="Pfam" id="PF07685">
    <property type="entry name" value="GATase_3"/>
    <property type="match status" value="1"/>
</dbReference>
<dbReference type="SUPFAM" id="SSF52317">
    <property type="entry name" value="Class I glutamine amidotransferase-like"/>
    <property type="match status" value="1"/>
</dbReference>
<dbReference type="SUPFAM" id="SSF52540">
    <property type="entry name" value="P-loop containing nucleoside triphosphate hydrolases"/>
    <property type="match status" value="1"/>
</dbReference>
<dbReference type="PROSITE" id="PS51274">
    <property type="entry name" value="GATASE_COBBQ"/>
    <property type="match status" value="1"/>
</dbReference>
<keyword id="KW-0169">Cobalamin biosynthesis</keyword>
<keyword id="KW-0315">Glutamine amidotransferase</keyword>
<keyword id="KW-1185">Reference proteome</keyword>
<proteinExistence type="inferred from homology"/>
<protein>
    <recommendedName>
        <fullName evidence="1">Cobyric acid synthase</fullName>
    </recommendedName>
</protein>
<organism>
    <name type="scientific">Rippkaea orientalis (strain PCC 8801 / RF-1)</name>
    <name type="common">Cyanothece sp. (strain PCC 8801)</name>
    <dbReference type="NCBI Taxonomy" id="41431"/>
    <lineage>
        <taxon>Bacteria</taxon>
        <taxon>Bacillati</taxon>
        <taxon>Cyanobacteriota</taxon>
        <taxon>Cyanophyceae</taxon>
        <taxon>Oscillatoriophycideae</taxon>
        <taxon>Chroococcales</taxon>
        <taxon>Aphanothecaceae</taxon>
        <taxon>Rippkaea</taxon>
        <taxon>Rippkaea orientalis</taxon>
    </lineage>
</organism>
<gene>
    <name evidence="1" type="primary">cobQ</name>
    <name type="ordered locus">PCC8801_1628</name>
</gene>
<evidence type="ECO:0000255" key="1">
    <source>
        <dbReference type="HAMAP-Rule" id="MF_00028"/>
    </source>
</evidence>
<reference key="1">
    <citation type="journal article" date="2011" name="MBio">
        <title>Novel metabolic attributes of the genus Cyanothece, comprising a group of unicellular nitrogen-fixing Cyanobacteria.</title>
        <authorList>
            <person name="Bandyopadhyay A."/>
            <person name="Elvitigala T."/>
            <person name="Welsh E."/>
            <person name="Stockel J."/>
            <person name="Liberton M."/>
            <person name="Min H."/>
            <person name="Sherman L.A."/>
            <person name="Pakrasi H.B."/>
        </authorList>
    </citation>
    <scope>NUCLEOTIDE SEQUENCE [LARGE SCALE GENOMIC DNA]</scope>
    <source>
        <strain>PCC 8801 / RF-1</strain>
    </source>
</reference>